<dbReference type="EMBL" id="X91837">
    <property type="protein sequence ID" value="CAA62945.1"/>
    <property type="molecule type" value="Genomic_DNA"/>
</dbReference>
<dbReference type="EMBL" id="Z72721">
    <property type="protein sequence ID" value="CAA96910.1"/>
    <property type="molecule type" value="Genomic_DNA"/>
</dbReference>
<dbReference type="PIR" id="S62046">
    <property type="entry name" value="S62046"/>
</dbReference>
<dbReference type="STRING" id="4932.YGL199C"/>
<dbReference type="PaxDb" id="4932-YGL199C"/>
<dbReference type="EnsemblFungi" id="YGL199C_mRNA">
    <property type="protein sequence ID" value="YGL199C"/>
    <property type="gene ID" value="YGL199C"/>
</dbReference>
<dbReference type="AGR" id="SGD:S000003167"/>
<dbReference type="SGD" id="S000003167">
    <property type="gene designation" value="YGL199C"/>
</dbReference>
<dbReference type="HOGENOM" id="CLU_1688123_0_0_1"/>
<protein>
    <recommendedName>
        <fullName>Putative uncharacterized protein YGL199C</fullName>
    </recommendedName>
</protein>
<name>YGU9_YEAST</name>
<organism>
    <name type="scientific">Saccharomyces cerevisiae (strain ATCC 204508 / S288c)</name>
    <name type="common">Baker's yeast</name>
    <dbReference type="NCBI Taxonomy" id="559292"/>
    <lineage>
        <taxon>Eukaryota</taxon>
        <taxon>Fungi</taxon>
        <taxon>Dikarya</taxon>
        <taxon>Ascomycota</taxon>
        <taxon>Saccharomycotina</taxon>
        <taxon>Saccharomycetes</taxon>
        <taxon>Saccharomycetales</taxon>
        <taxon>Saccharomycetaceae</taxon>
        <taxon>Saccharomyces</taxon>
    </lineage>
</organism>
<feature type="chain" id="PRO_0000202720" description="Putative uncharacterized protein YGL199C">
    <location>
        <begin position="1"/>
        <end position="156"/>
    </location>
</feature>
<comment type="miscellaneous">
    <text evidence="1">Product of a dubious gene prediction. Almost completely overlaps YIP4.</text>
</comment>
<comment type="caution">
    <text evidence="2">Product of a dubious gene prediction unlikely to encode a functional protein. Because of that it is not part of the S.cerevisiae S288c complete/reference proteome set.</text>
</comment>
<accession>P53092</accession>
<evidence type="ECO:0000305" key="1"/>
<evidence type="ECO:0000305" key="2">
    <source>
    </source>
</evidence>
<proteinExistence type="uncertain"/>
<gene>
    <name type="ordered locus">YGL199C</name>
    <name type="ORF">G1301</name>
</gene>
<sequence>MEMYEISDTLWCGLVSLRCNAITSKMNQLDTNRLENSDRACDTNREYNMINARGAHRSQLAEMSLSAAPIPSSEGLKNEGKCGYTTCFSLELISTTSRFSVCSTVSSSVPLLPEFCIVPPMLSATPPEAAKGASGSMKSGSIVVSSLPYDILPALL</sequence>
<reference key="1">
    <citation type="journal article" date="1997" name="Yeast">
        <title>Sequencing of a 40.5 kb fragment located on the left arm of chromosome VII from Saccharomyces cerevisiae.</title>
        <authorList>
            <person name="Coglievina M."/>
            <person name="Klima R."/>
            <person name="Bertani I."/>
            <person name="Delneri D."/>
            <person name="Zaccaria P."/>
            <person name="Bruschi C.V."/>
        </authorList>
    </citation>
    <scope>NUCLEOTIDE SEQUENCE [GENOMIC DNA]</scope>
    <source>
        <strain>ATCC 96604 / S288c / FY1679</strain>
    </source>
</reference>
<reference key="2">
    <citation type="journal article" date="1997" name="Nature">
        <title>The nucleotide sequence of Saccharomyces cerevisiae chromosome VII.</title>
        <authorList>
            <person name="Tettelin H."/>
            <person name="Agostoni-Carbone M.L."/>
            <person name="Albermann K."/>
            <person name="Albers M."/>
            <person name="Arroyo J."/>
            <person name="Backes U."/>
            <person name="Barreiros T."/>
            <person name="Bertani I."/>
            <person name="Bjourson A.J."/>
            <person name="Brueckner M."/>
            <person name="Bruschi C.V."/>
            <person name="Carignani G."/>
            <person name="Castagnoli L."/>
            <person name="Cerdan E."/>
            <person name="Clemente M.L."/>
            <person name="Coblenz A."/>
            <person name="Coglievina M."/>
            <person name="Coissac E."/>
            <person name="Defoor E."/>
            <person name="Del Bino S."/>
            <person name="Delius H."/>
            <person name="Delneri D."/>
            <person name="de Wergifosse P."/>
            <person name="Dujon B."/>
            <person name="Durand P."/>
            <person name="Entian K.-D."/>
            <person name="Eraso P."/>
            <person name="Escribano V."/>
            <person name="Fabiani L."/>
            <person name="Fartmann B."/>
            <person name="Feroli F."/>
            <person name="Feuermann M."/>
            <person name="Frontali L."/>
            <person name="Garcia-Gonzalez M."/>
            <person name="Garcia-Saez M.I."/>
            <person name="Goffeau A."/>
            <person name="Guerreiro P."/>
            <person name="Hani J."/>
            <person name="Hansen M."/>
            <person name="Hebling U."/>
            <person name="Hernandez K."/>
            <person name="Heumann K."/>
            <person name="Hilger F."/>
            <person name="Hofmann B."/>
            <person name="Indge K.J."/>
            <person name="James C.M."/>
            <person name="Klima R."/>
            <person name="Koetter P."/>
            <person name="Kramer B."/>
            <person name="Kramer W."/>
            <person name="Lauquin G."/>
            <person name="Leuther H."/>
            <person name="Louis E.J."/>
            <person name="Maillier E."/>
            <person name="Marconi A."/>
            <person name="Martegani E."/>
            <person name="Mazon M.J."/>
            <person name="Mazzoni C."/>
            <person name="McReynolds A.D.K."/>
            <person name="Melchioretto P."/>
            <person name="Mewes H.-W."/>
            <person name="Minenkova O."/>
            <person name="Mueller-Auer S."/>
            <person name="Nawrocki A."/>
            <person name="Netter P."/>
            <person name="Neu R."/>
            <person name="Nombela C."/>
            <person name="Oliver S.G."/>
            <person name="Panzeri L."/>
            <person name="Paoluzi S."/>
            <person name="Plevani P."/>
            <person name="Portetelle D."/>
            <person name="Portillo F."/>
            <person name="Potier S."/>
            <person name="Purnelle B."/>
            <person name="Rieger M."/>
            <person name="Riles L."/>
            <person name="Rinaldi T."/>
            <person name="Robben J."/>
            <person name="Rodrigues-Pousada C."/>
            <person name="Rodriguez-Belmonte E."/>
            <person name="Rodriguez-Torres A.M."/>
            <person name="Rose M."/>
            <person name="Ruzzi M."/>
            <person name="Saliola M."/>
            <person name="Sanchez-Perez M."/>
            <person name="Schaefer B."/>
            <person name="Schaefer M."/>
            <person name="Scharfe M."/>
            <person name="Schmidheini T."/>
            <person name="Schreer A."/>
            <person name="Skala J."/>
            <person name="Souciet J.-L."/>
            <person name="Steensma H.Y."/>
            <person name="Talla E."/>
            <person name="Thierry A."/>
            <person name="Vandenbol M."/>
            <person name="van der Aart Q.J.M."/>
            <person name="Van Dyck L."/>
            <person name="Vanoni M."/>
            <person name="Verhasselt P."/>
            <person name="Voet M."/>
            <person name="Volckaert G."/>
            <person name="Wambutt R."/>
            <person name="Watson M.D."/>
            <person name="Weber N."/>
            <person name="Wedler E."/>
            <person name="Wedler H."/>
            <person name="Wipfli P."/>
            <person name="Wolf K."/>
            <person name="Wright L.F."/>
            <person name="Zaccaria P."/>
            <person name="Zimmermann M."/>
            <person name="Zollner A."/>
            <person name="Kleine K."/>
        </authorList>
    </citation>
    <scope>NUCLEOTIDE SEQUENCE [LARGE SCALE GENOMIC DNA]</scope>
    <source>
        <strain>ATCC 204508 / S288c</strain>
    </source>
</reference>
<reference key="3">
    <citation type="journal article" date="2014" name="G3 (Bethesda)">
        <title>The reference genome sequence of Saccharomyces cerevisiae: Then and now.</title>
        <authorList>
            <person name="Engel S.R."/>
            <person name="Dietrich F.S."/>
            <person name="Fisk D.G."/>
            <person name="Binkley G."/>
            <person name="Balakrishnan R."/>
            <person name="Costanzo M.C."/>
            <person name="Dwight S.S."/>
            <person name="Hitz B.C."/>
            <person name="Karra K."/>
            <person name="Nash R.S."/>
            <person name="Weng S."/>
            <person name="Wong E.D."/>
            <person name="Lloyd P."/>
            <person name="Skrzypek M.S."/>
            <person name="Miyasato S.R."/>
            <person name="Simison M."/>
            <person name="Cherry J.M."/>
        </authorList>
    </citation>
    <scope>GENOME REANNOTATION</scope>
    <source>
        <strain>ATCC 204508 / S288c</strain>
    </source>
</reference>